<proteinExistence type="inferred from homology"/>
<sequence length="504" mass="55596">MSSKGIQKKTKAVDATKKLAEKIKKQALKQKALASASSAASTKESLPVSETISISTSETPVSDVSELSNKEDLSTKKDQSSASSSSSTSSSSSPPSVQSFTEFDLVPELLESIQSLKYTQPTPIQAAAIPHALQGKDIVGIAETGSGKTAAFAIPILQTLYTAAQPYYALVLAPTRELAFQIKETFDALGSSMGLRSVCIIGGMSMMEQARDLMRKPHVIIATPGRLIDHLEHTKGFSLKKLQYLVMDEVDRMIDLDYAKAIDQILKQIPSHQRITYLYTATMSREIEKFKRSLNSPVQVEIVKLEKVPDKLKQTMCLTSPNTKDTRLIQIVNLDSMKRVIIFTRTVVHTRRCCLMLLNLGFKCVELHGQMPQSRRLGAINKFKAGTPILVATDVAARGLDIPAVDLVINYDIPDPTLYIHRVGRTARAGKAGKAISLVTQYDLESYLRIENTLGTKLPKEDLPLDEMQGLQVSVDRALSKAIQMLRNEENDNKLRHRGRSNNK</sequence>
<protein>
    <recommendedName>
        <fullName evidence="5">ATP-dependent rRNA helicase RRP3</fullName>
        <ecNumber evidence="1">3.6.4.13</ecNumber>
    </recommendedName>
</protein>
<evidence type="ECO:0000250" key="1">
    <source>
        <dbReference type="UniProtKB" id="P38712"/>
    </source>
</evidence>
<evidence type="ECO:0000255" key="2">
    <source>
        <dbReference type="PROSITE-ProRule" id="PRU00541"/>
    </source>
</evidence>
<evidence type="ECO:0000255" key="3">
    <source>
        <dbReference type="PROSITE-ProRule" id="PRU00542"/>
    </source>
</evidence>
<evidence type="ECO:0000256" key="4">
    <source>
        <dbReference type="SAM" id="MobiDB-lite"/>
    </source>
</evidence>
<evidence type="ECO:0000305" key="5"/>
<reference key="1">
    <citation type="journal article" date="2009" name="Nature">
        <title>Evolution of pathogenicity and sexual reproduction in eight Candida genomes.</title>
        <authorList>
            <person name="Butler G."/>
            <person name="Rasmussen M.D."/>
            <person name="Lin M.F."/>
            <person name="Santos M.A.S."/>
            <person name="Sakthikumar S."/>
            <person name="Munro C.A."/>
            <person name="Rheinbay E."/>
            <person name="Grabherr M."/>
            <person name="Forche A."/>
            <person name="Reedy J.L."/>
            <person name="Agrafioti I."/>
            <person name="Arnaud M.B."/>
            <person name="Bates S."/>
            <person name="Brown A.J.P."/>
            <person name="Brunke S."/>
            <person name="Costanzo M.C."/>
            <person name="Fitzpatrick D.A."/>
            <person name="de Groot P.W.J."/>
            <person name="Harris D."/>
            <person name="Hoyer L.L."/>
            <person name="Hube B."/>
            <person name="Klis F.M."/>
            <person name="Kodira C."/>
            <person name="Lennard N."/>
            <person name="Logue M.E."/>
            <person name="Martin R."/>
            <person name="Neiman A.M."/>
            <person name="Nikolaou E."/>
            <person name="Quail M.A."/>
            <person name="Quinn J."/>
            <person name="Santos M.C."/>
            <person name="Schmitzberger F.F."/>
            <person name="Sherlock G."/>
            <person name="Shah P."/>
            <person name="Silverstein K.A.T."/>
            <person name="Skrzypek M.S."/>
            <person name="Soll D."/>
            <person name="Staggs R."/>
            <person name="Stansfield I."/>
            <person name="Stumpf M.P.H."/>
            <person name="Sudbery P.E."/>
            <person name="Srikantha T."/>
            <person name="Zeng Q."/>
            <person name="Berman J."/>
            <person name="Berriman M."/>
            <person name="Heitman J."/>
            <person name="Gow N.A.R."/>
            <person name="Lorenz M.C."/>
            <person name="Birren B.W."/>
            <person name="Kellis M."/>
            <person name="Cuomo C.A."/>
        </authorList>
    </citation>
    <scope>NUCLEOTIDE SEQUENCE [LARGE SCALE GENOMIC DNA]</scope>
    <source>
        <strain>ATCC 11503 / BCRC 21390 / CBS 2605 / JCM 1781 / NBRC 1676 / NRRL YB-4239</strain>
    </source>
</reference>
<organism>
    <name type="scientific">Lodderomyces elongisporus (strain ATCC 11503 / CBS 2605 / JCM 1781 / NBRC 1676 / NRRL YB-4239)</name>
    <name type="common">Yeast</name>
    <name type="synonym">Saccharomyces elongisporus</name>
    <dbReference type="NCBI Taxonomy" id="379508"/>
    <lineage>
        <taxon>Eukaryota</taxon>
        <taxon>Fungi</taxon>
        <taxon>Dikarya</taxon>
        <taxon>Ascomycota</taxon>
        <taxon>Saccharomycotina</taxon>
        <taxon>Pichiomycetes</taxon>
        <taxon>Debaryomycetaceae</taxon>
        <taxon>Candida/Lodderomyces clade</taxon>
        <taxon>Lodderomyces</taxon>
    </lineage>
</organism>
<name>RRP3_LODEL</name>
<gene>
    <name evidence="1" type="primary">RRP3</name>
    <name type="ORF">LELG_05355</name>
</gene>
<dbReference type="EC" id="3.6.4.13" evidence="1"/>
<dbReference type="EMBL" id="CH981532">
    <property type="protein sequence ID" value="EDK47174.1"/>
    <property type="molecule type" value="Genomic_DNA"/>
</dbReference>
<dbReference type="RefSeq" id="XP_001523509.1">
    <property type="nucleotide sequence ID" value="XM_001523459.1"/>
</dbReference>
<dbReference type="SMR" id="A5E6W6"/>
<dbReference type="FunCoup" id="A5E6W6">
    <property type="interactions" value="1102"/>
</dbReference>
<dbReference type="STRING" id="379508.A5E6W6"/>
<dbReference type="GeneID" id="5230544"/>
<dbReference type="KEGG" id="lel:PVL30_002450"/>
<dbReference type="VEuPathDB" id="FungiDB:LELG_05355"/>
<dbReference type="eggNOG" id="KOG0330">
    <property type="taxonomic scope" value="Eukaryota"/>
</dbReference>
<dbReference type="HOGENOM" id="CLU_003041_1_1_1"/>
<dbReference type="InParanoid" id="A5E6W6"/>
<dbReference type="OMA" id="GIGIKCC"/>
<dbReference type="OrthoDB" id="10261904at2759"/>
<dbReference type="Proteomes" id="UP000001996">
    <property type="component" value="Unassembled WGS sequence"/>
</dbReference>
<dbReference type="GO" id="GO:0005829">
    <property type="term" value="C:cytosol"/>
    <property type="evidence" value="ECO:0007669"/>
    <property type="project" value="TreeGrafter"/>
</dbReference>
<dbReference type="GO" id="GO:0005730">
    <property type="term" value="C:nucleolus"/>
    <property type="evidence" value="ECO:0007669"/>
    <property type="project" value="EnsemblFungi"/>
</dbReference>
<dbReference type="GO" id="GO:0032040">
    <property type="term" value="C:small-subunit processome"/>
    <property type="evidence" value="ECO:0007669"/>
    <property type="project" value="EnsemblFungi"/>
</dbReference>
<dbReference type="GO" id="GO:0005524">
    <property type="term" value="F:ATP binding"/>
    <property type="evidence" value="ECO:0007669"/>
    <property type="project" value="UniProtKB-KW"/>
</dbReference>
<dbReference type="GO" id="GO:0016887">
    <property type="term" value="F:ATP hydrolysis activity"/>
    <property type="evidence" value="ECO:0007669"/>
    <property type="project" value="RHEA"/>
</dbReference>
<dbReference type="GO" id="GO:0003723">
    <property type="term" value="F:RNA binding"/>
    <property type="evidence" value="ECO:0007669"/>
    <property type="project" value="UniProtKB-KW"/>
</dbReference>
<dbReference type="GO" id="GO:0003724">
    <property type="term" value="F:RNA helicase activity"/>
    <property type="evidence" value="ECO:0007669"/>
    <property type="project" value="UniProtKB-EC"/>
</dbReference>
<dbReference type="GO" id="GO:0000462">
    <property type="term" value="P:maturation of SSU-rRNA from tricistronic rRNA transcript (SSU-rRNA, 5.8S rRNA, LSU-rRNA)"/>
    <property type="evidence" value="ECO:0007669"/>
    <property type="project" value="EnsemblFungi"/>
</dbReference>
<dbReference type="CDD" id="cd18787">
    <property type="entry name" value="SF2_C_DEAD"/>
    <property type="match status" value="1"/>
</dbReference>
<dbReference type="Gene3D" id="3.40.50.300">
    <property type="entry name" value="P-loop containing nucleotide triphosphate hydrolases"/>
    <property type="match status" value="2"/>
</dbReference>
<dbReference type="InterPro" id="IPR011545">
    <property type="entry name" value="DEAD/DEAH_box_helicase_dom"/>
</dbReference>
<dbReference type="InterPro" id="IPR050079">
    <property type="entry name" value="DEAD_box_RNA_helicase"/>
</dbReference>
<dbReference type="InterPro" id="IPR014001">
    <property type="entry name" value="Helicase_ATP-bd"/>
</dbReference>
<dbReference type="InterPro" id="IPR001650">
    <property type="entry name" value="Helicase_C-like"/>
</dbReference>
<dbReference type="InterPro" id="IPR027417">
    <property type="entry name" value="P-loop_NTPase"/>
</dbReference>
<dbReference type="InterPro" id="IPR014014">
    <property type="entry name" value="RNA_helicase_DEAD_Q_motif"/>
</dbReference>
<dbReference type="PANTHER" id="PTHR47959:SF24">
    <property type="entry name" value="ATP-DEPENDENT RNA HELICASE"/>
    <property type="match status" value="1"/>
</dbReference>
<dbReference type="PANTHER" id="PTHR47959">
    <property type="entry name" value="ATP-DEPENDENT RNA HELICASE RHLE-RELATED"/>
    <property type="match status" value="1"/>
</dbReference>
<dbReference type="Pfam" id="PF00270">
    <property type="entry name" value="DEAD"/>
    <property type="match status" value="1"/>
</dbReference>
<dbReference type="Pfam" id="PF00271">
    <property type="entry name" value="Helicase_C"/>
    <property type="match status" value="1"/>
</dbReference>
<dbReference type="SMART" id="SM00487">
    <property type="entry name" value="DEXDc"/>
    <property type="match status" value="1"/>
</dbReference>
<dbReference type="SMART" id="SM00490">
    <property type="entry name" value="HELICc"/>
    <property type="match status" value="1"/>
</dbReference>
<dbReference type="SUPFAM" id="SSF52540">
    <property type="entry name" value="P-loop containing nucleoside triphosphate hydrolases"/>
    <property type="match status" value="1"/>
</dbReference>
<dbReference type="PROSITE" id="PS51192">
    <property type="entry name" value="HELICASE_ATP_BIND_1"/>
    <property type="match status" value="1"/>
</dbReference>
<dbReference type="PROSITE" id="PS51194">
    <property type="entry name" value="HELICASE_CTER"/>
    <property type="match status" value="1"/>
</dbReference>
<dbReference type="PROSITE" id="PS51195">
    <property type="entry name" value="Q_MOTIF"/>
    <property type="match status" value="1"/>
</dbReference>
<comment type="function">
    <text evidence="1">ATP-dependent rRNA helicase required for pre-ribosomal RNA processing. Involved in the maturation of the 35S-pre-rRNA and to its cleavage to mature 18S rRNA.</text>
</comment>
<comment type="catalytic activity">
    <reaction evidence="1">
        <text>ATP + H2O = ADP + phosphate + H(+)</text>
        <dbReference type="Rhea" id="RHEA:13065"/>
        <dbReference type="ChEBI" id="CHEBI:15377"/>
        <dbReference type="ChEBI" id="CHEBI:15378"/>
        <dbReference type="ChEBI" id="CHEBI:30616"/>
        <dbReference type="ChEBI" id="CHEBI:43474"/>
        <dbReference type="ChEBI" id="CHEBI:456216"/>
        <dbReference type="EC" id="3.6.4.13"/>
    </reaction>
</comment>
<comment type="subunit">
    <text evidence="1">Interacts with the SSU processome.</text>
</comment>
<comment type="subcellular location">
    <subcellularLocation>
        <location evidence="5">Nucleus</location>
    </subcellularLocation>
</comment>
<comment type="domain">
    <text evidence="5">The Q motif is unique to and characteristic of the DEAD box family of RNA helicases and controls ATP binding and hydrolysis.</text>
</comment>
<comment type="similarity">
    <text evidence="5">Belongs to the DEAD box helicase family. DDX47/RRP3 subfamily.</text>
</comment>
<feature type="chain" id="PRO_0000294651" description="ATP-dependent rRNA helicase RRP3">
    <location>
        <begin position="1"/>
        <end position="504"/>
    </location>
</feature>
<feature type="domain" description="Helicase ATP-binding" evidence="2">
    <location>
        <begin position="129"/>
        <end position="301"/>
    </location>
</feature>
<feature type="domain" description="Helicase C-terminal" evidence="3">
    <location>
        <begin position="327"/>
        <end position="471"/>
    </location>
</feature>
<feature type="region of interest" description="Disordered" evidence="4">
    <location>
        <begin position="34"/>
        <end position="99"/>
    </location>
</feature>
<feature type="short sequence motif" description="Q motif" evidence="5">
    <location>
        <begin position="98"/>
        <end position="126"/>
    </location>
</feature>
<feature type="short sequence motif" description="DEAD box" evidence="5">
    <location>
        <begin position="248"/>
        <end position="251"/>
    </location>
</feature>
<feature type="compositionally biased region" description="Low complexity" evidence="4">
    <location>
        <begin position="34"/>
        <end position="62"/>
    </location>
</feature>
<feature type="compositionally biased region" description="Basic and acidic residues" evidence="4">
    <location>
        <begin position="68"/>
        <end position="79"/>
    </location>
</feature>
<feature type="compositionally biased region" description="Low complexity" evidence="4">
    <location>
        <begin position="80"/>
        <end position="99"/>
    </location>
</feature>
<feature type="binding site" evidence="2">
    <location>
        <begin position="142"/>
        <end position="149"/>
    </location>
    <ligand>
        <name>ATP</name>
        <dbReference type="ChEBI" id="CHEBI:30616"/>
    </ligand>
</feature>
<accession>A5E6W6</accession>
<keyword id="KW-0067">ATP-binding</keyword>
<keyword id="KW-0347">Helicase</keyword>
<keyword id="KW-0378">Hydrolase</keyword>
<keyword id="KW-0547">Nucleotide-binding</keyword>
<keyword id="KW-0539">Nucleus</keyword>
<keyword id="KW-1185">Reference proteome</keyword>
<keyword id="KW-0690">Ribosome biogenesis</keyword>
<keyword id="KW-0694">RNA-binding</keyword>
<keyword id="KW-0698">rRNA processing</keyword>